<organism>
    <name type="scientific">Kluyveromyces lactis (strain ATCC 8585 / CBS 2359 / DSM 70799 / NBRC 1267 / NRRL Y-1140 / WM37)</name>
    <name type="common">Yeast</name>
    <name type="synonym">Candida sphaerica</name>
    <dbReference type="NCBI Taxonomy" id="284590"/>
    <lineage>
        <taxon>Eukaryota</taxon>
        <taxon>Fungi</taxon>
        <taxon>Dikarya</taxon>
        <taxon>Ascomycota</taxon>
        <taxon>Saccharomycotina</taxon>
        <taxon>Saccharomycetes</taxon>
        <taxon>Saccharomycetales</taxon>
        <taxon>Saccharomycetaceae</taxon>
        <taxon>Kluyveromyces</taxon>
    </lineage>
</organism>
<dbReference type="EMBL" id="CR382123">
    <property type="protein sequence ID" value="CAH01379.1"/>
    <property type="molecule type" value="Genomic_DNA"/>
</dbReference>
<dbReference type="RefSeq" id="XP_452528.1">
    <property type="nucleotide sequence ID" value="XM_452528.1"/>
</dbReference>
<dbReference type="FunCoup" id="Q6CU61">
    <property type="interactions" value="88"/>
</dbReference>
<dbReference type="STRING" id="284590.Q6CU61"/>
<dbReference type="PaxDb" id="284590-Q6CU61"/>
<dbReference type="KEGG" id="kla:KLLA0_C07381g"/>
<dbReference type="eggNOG" id="KOG2530">
    <property type="taxonomic scope" value="Eukaryota"/>
</dbReference>
<dbReference type="HOGENOM" id="CLU_022511_2_2_1"/>
<dbReference type="InParanoid" id="Q6CU61"/>
<dbReference type="OMA" id="DNGWGGF"/>
<dbReference type="Proteomes" id="UP000000598">
    <property type="component" value="Chromosome C"/>
</dbReference>
<dbReference type="GO" id="GO:0005739">
    <property type="term" value="C:mitochondrion"/>
    <property type="evidence" value="ECO:0007669"/>
    <property type="project" value="UniProtKB-SubCell"/>
</dbReference>
<dbReference type="GO" id="GO:0007005">
    <property type="term" value="P:mitochondrion organization"/>
    <property type="evidence" value="ECO:0007669"/>
    <property type="project" value="InterPro"/>
</dbReference>
<dbReference type="Gene3D" id="3.40.50.1440">
    <property type="entry name" value="Tubulin/FtsZ, GTPase domain"/>
    <property type="match status" value="1"/>
</dbReference>
<dbReference type="InterPro" id="IPR049942">
    <property type="entry name" value="DML1/Misato"/>
</dbReference>
<dbReference type="InterPro" id="IPR029209">
    <property type="entry name" value="DML1/Misato_tubulin"/>
</dbReference>
<dbReference type="InterPro" id="IPR019605">
    <property type="entry name" value="Misato_II_tubulin-like"/>
</dbReference>
<dbReference type="InterPro" id="IPR036525">
    <property type="entry name" value="Tubulin/FtsZ_GTPase_sf"/>
</dbReference>
<dbReference type="PANTHER" id="PTHR13391">
    <property type="entry name" value="MITOCHONDRIAL DISTRIBUTION REGULATOR MISATO"/>
    <property type="match status" value="1"/>
</dbReference>
<dbReference type="PANTHER" id="PTHR13391:SF0">
    <property type="entry name" value="PROTEIN MISATO HOMOLOG 1"/>
    <property type="match status" value="1"/>
</dbReference>
<dbReference type="Pfam" id="PF10644">
    <property type="entry name" value="Misat_Tub_SegII"/>
    <property type="match status" value="1"/>
</dbReference>
<dbReference type="Pfam" id="PF14881">
    <property type="entry name" value="Tubulin_3"/>
    <property type="match status" value="1"/>
</dbReference>
<dbReference type="SUPFAM" id="SSF52490">
    <property type="entry name" value="Tubulin nucleotide-binding domain-like"/>
    <property type="match status" value="1"/>
</dbReference>
<name>DML1_KLULA</name>
<comment type="function">
    <text evidence="1">Involved in the partitioning of the mitochondrial organelle and mitochondrial DNA (mtDNA) inheritance.</text>
</comment>
<comment type="subcellular location">
    <subcellularLocation>
        <location evidence="1">Mitochondrion</location>
    </subcellularLocation>
</comment>
<comment type="similarity">
    <text evidence="2">Belongs to the misato family.</text>
</comment>
<proteinExistence type="inferred from homology"/>
<gene>
    <name type="primary">DML1</name>
    <name type="ordered locus">KLLA0C07381g</name>
</gene>
<feature type="chain" id="PRO_0000285336" description="Protein DML1">
    <location>
        <begin position="1"/>
        <end position="468"/>
    </location>
</feature>
<keyword id="KW-0496">Mitochondrion</keyword>
<keyword id="KW-1185">Reference proteome</keyword>
<protein>
    <recommendedName>
        <fullName>Protein DML1</fullName>
    </recommendedName>
</protein>
<accession>Q6CU61</accession>
<sequence>MREIINVSVSHRSNHLITQFYNCLEPLLHDADQENDVFLNPNIDKVSKTVSYTPRALLWDAKLGNGSLGTYQYVSENDYADTLDSEQGATAKTAHRVQTHDRIRKSPYQLALDQGATVLPKINDEIAKYWSDYSKLIYDPSSFNTLQDWYHDAANQQKAPNFQNLRQVYFDNYETGSNQFRENYSNEFFDSNLHQQLEKCDSLQGFNIITELDNGWGGFSSSMLLELKDELPKVSYHTYGWNQDDVCSLKEPVHSTKTKFQMLCNKIRATIALSQESDLFFPLYANTKEAFWRSTGETVLLFDSVNSVFHGSRKQAATNSNMRKMSHLTNALTLGESKRNIVSKLNVDEYNSFSFYDRMPLYKNSKKPSHTFTQCEIDRVNHKESSMFHFTTYPWTNSDTIPDTHHSCAESVIGVTEKPRDVLKTWEDLVSRYFRYDSDREEIKDHLGTLSLEYEHGWYDDDDSDLDL</sequence>
<reference key="1">
    <citation type="journal article" date="2004" name="Nature">
        <title>Genome evolution in yeasts.</title>
        <authorList>
            <person name="Dujon B."/>
            <person name="Sherman D."/>
            <person name="Fischer G."/>
            <person name="Durrens P."/>
            <person name="Casaregola S."/>
            <person name="Lafontaine I."/>
            <person name="de Montigny J."/>
            <person name="Marck C."/>
            <person name="Neuveglise C."/>
            <person name="Talla E."/>
            <person name="Goffard N."/>
            <person name="Frangeul L."/>
            <person name="Aigle M."/>
            <person name="Anthouard V."/>
            <person name="Babour A."/>
            <person name="Barbe V."/>
            <person name="Barnay S."/>
            <person name="Blanchin S."/>
            <person name="Beckerich J.-M."/>
            <person name="Beyne E."/>
            <person name="Bleykasten C."/>
            <person name="Boisrame A."/>
            <person name="Boyer J."/>
            <person name="Cattolico L."/>
            <person name="Confanioleri F."/>
            <person name="de Daruvar A."/>
            <person name="Despons L."/>
            <person name="Fabre E."/>
            <person name="Fairhead C."/>
            <person name="Ferry-Dumazet H."/>
            <person name="Groppi A."/>
            <person name="Hantraye F."/>
            <person name="Hennequin C."/>
            <person name="Jauniaux N."/>
            <person name="Joyet P."/>
            <person name="Kachouri R."/>
            <person name="Kerrest A."/>
            <person name="Koszul R."/>
            <person name="Lemaire M."/>
            <person name="Lesur I."/>
            <person name="Ma L."/>
            <person name="Muller H."/>
            <person name="Nicaud J.-M."/>
            <person name="Nikolski M."/>
            <person name="Oztas S."/>
            <person name="Ozier-Kalogeropoulos O."/>
            <person name="Pellenz S."/>
            <person name="Potier S."/>
            <person name="Richard G.-F."/>
            <person name="Straub M.-L."/>
            <person name="Suleau A."/>
            <person name="Swennen D."/>
            <person name="Tekaia F."/>
            <person name="Wesolowski-Louvel M."/>
            <person name="Westhof E."/>
            <person name="Wirth B."/>
            <person name="Zeniou-Meyer M."/>
            <person name="Zivanovic Y."/>
            <person name="Bolotin-Fukuhara M."/>
            <person name="Thierry A."/>
            <person name="Bouchier C."/>
            <person name="Caudron B."/>
            <person name="Scarpelli C."/>
            <person name="Gaillardin C."/>
            <person name="Weissenbach J."/>
            <person name="Wincker P."/>
            <person name="Souciet J.-L."/>
        </authorList>
    </citation>
    <scope>NUCLEOTIDE SEQUENCE [LARGE SCALE GENOMIC DNA]</scope>
    <source>
        <strain>ATCC 8585 / CBS 2359 / DSM 70799 / NBRC 1267 / NRRL Y-1140 / WM37</strain>
    </source>
</reference>
<evidence type="ECO:0000250" key="1"/>
<evidence type="ECO:0000305" key="2"/>